<accession>A3LXE7</accession>
<reference key="1">
    <citation type="journal article" date="2007" name="Nat. Biotechnol.">
        <title>Genome sequence of the lignocellulose-bioconverting and xylose-fermenting yeast Pichia stipitis.</title>
        <authorList>
            <person name="Jeffries T.W."/>
            <person name="Grigoriev I.V."/>
            <person name="Grimwood J."/>
            <person name="Laplaza J.M."/>
            <person name="Aerts A."/>
            <person name="Salamov A."/>
            <person name="Schmutz J."/>
            <person name="Lindquist E."/>
            <person name="Dehal P."/>
            <person name="Shapiro H."/>
            <person name="Jin Y.-S."/>
            <person name="Passoth V."/>
            <person name="Richardson P.M."/>
        </authorList>
    </citation>
    <scope>NUCLEOTIDE SEQUENCE [LARGE SCALE GENOMIC DNA]</scope>
    <source>
        <strain>ATCC 58785 / CBS 6054 / NBRC 10063 / NRRL Y-11545</strain>
    </source>
</reference>
<gene>
    <name type="primary">HTA2</name>
    <name type="ORF">PICST_73490</name>
</gene>
<feature type="initiator methionine" description="Removed" evidence="1">
    <location>
        <position position="1"/>
    </location>
</feature>
<feature type="chain" id="PRO_0000297741" description="Histone H2A.2">
    <location>
        <begin position="2"/>
        <end position="131"/>
    </location>
</feature>
<feature type="region of interest" description="Disordered" evidence="2">
    <location>
        <begin position="1"/>
        <end position="22"/>
    </location>
</feature>
<feature type="short sequence motif" description="[ST]-Q motif">
    <location>
        <begin position="128"/>
        <end position="129"/>
    </location>
</feature>
<feature type="modified residue" description="N-acetylserine" evidence="1">
    <location>
        <position position="2"/>
    </location>
</feature>
<feature type="modified residue" description="N6-acetyllysine" evidence="1">
    <location>
        <position position="5"/>
    </location>
</feature>
<feature type="modified residue" description="N6-acetyllysine" evidence="1">
    <location>
        <position position="7"/>
    </location>
</feature>
<feature type="modified residue" description="N5-methylglutamine" evidence="1">
    <location>
        <position position="105"/>
    </location>
</feature>
<feature type="modified residue" description="Phosphoserine" evidence="1">
    <location>
        <position position="128"/>
    </location>
</feature>
<feature type="cross-link" description="Glycyl lysine isopeptide (Lys-Gly) (interchain with G-Cter in SUMO)" evidence="1">
    <location>
        <position position="126"/>
    </location>
</feature>
<proteinExistence type="inferred from homology"/>
<organism>
    <name type="scientific">Scheffersomyces stipitis (strain ATCC 58785 / CBS 6054 / NBRC 10063 / NRRL Y-11545)</name>
    <name type="common">Yeast</name>
    <name type="synonym">Pichia stipitis</name>
    <dbReference type="NCBI Taxonomy" id="322104"/>
    <lineage>
        <taxon>Eukaryota</taxon>
        <taxon>Fungi</taxon>
        <taxon>Dikarya</taxon>
        <taxon>Ascomycota</taxon>
        <taxon>Saccharomycotina</taxon>
        <taxon>Pichiomycetes</taxon>
        <taxon>Debaryomycetaceae</taxon>
        <taxon>Scheffersomyces</taxon>
    </lineage>
</organism>
<keyword id="KW-0007">Acetylation</keyword>
<keyword id="KW-0158">Chromosome</keyword>
<keyword id="KW-0227">DNA damage</keyword>
<keyword id="KW-0234">DNA repair</keyword>
<keyword id="KW-0238">DNA-binding</keyword>
<keyword id="KW-1017">Isopeptide bond</keyword>
<keyword id="KW-0488">Methylation</keyword>
<keyword id="KW-0544">Nucleosome core</keyword>
<keyword id="KW-0539">Nucleus</keyword>
<keyword id="KW-0597">Phosphoprotein</keyword>
<keyword id="KW-1185">Reference proteome</keyword>
<keyword id="KW-0832">Ubl conjugation</keyword>
<sequence>MSGGKGKAGSSEKASTSRSAKAGLTFPVGRVHRLLRKGNYAQRVGSGAPVYLTSVLEYLAAEILELAGNAARDNKKSRIIPRHLQLAIRNDEELNKLLGHVTIAQGGVLPNIHQSLLPAKKAKPGKASQEL</sequence>
<evidence type="ECO:0000250" key="1"/>
<evidence type="ECO:0000256" key="2">
    <source>
        <dbReference type="SAM" id="MobiDB-lite"/>
    </source>
</evidence>
<evidence type="ECO:0000305" key="3"/>
<comment type="function">
    <text>Core component of nucleosome which plays a central role in DNA double strand break (DSB) repair. Nucleosomes wrap and compact DNA into chromatin, limiting DNA accessibility to the cellular machineries which require DNA as a template. Histones thereby play a central role in transcription regulation, DNA repair, DNA replication and chromosomal stability. DNA accessibility is regulated via a complex set of post-translational modifications of histones, also called histone code, and nucleosome remodeling.</text>
</comment>
<comment type="subunit">
    <text>The nucleosome is a histone octamer containing two molecules each of H2A, H2B, H3 and H4 assembled in one H3-H4 heterotetramer and two H2A-H2B heterodimers. The octamer wraps approximately 147 bp of DNA.</text>
</comment>
<comment type="subcellular location">
    <subcellularLocation>
        <location>Nucleus</location>
    </subcellularLocation>
    <subcellularLocation>
        <location>Chromosome</location>
    </subcellularLocation>
</comment>
<comment type="domain">
    <text>The [ST]-Q motif constitutes a recognition sequence for kinases from the PI3/PI4-kinase family.</text>
</comment>
<comment type="PTM">
    <text evidence="1">Phosphorylated to form H2AS128ph (gamma-H2A) in response to DNA double-strand breaks (DSBs) generated by exogenous genotoxic agents and by stalled replication forks. Phosphorylation is dependent on the DNA damage checkpoint kinases MEC1/ATR and TEL1/ATM, spreads on either side of a detected DSB site and may mark the surrounding chromatin for recruitment of proteins required for DNA damage signaling and repair. Gamma-H2A is removed from the DNA prior to the strand invasion-primer extension step of the repair process and subsequently dephosphorylated. Dephosphorylation is necessary for efficient recovery from the DNA damage checkpoint (By similarity).</text>
</comment>
<comment type="PTM">
    <text evidence="1">Acetylated by ESA1 to form H2AK4ac and H2AK7ac.</text>
</comment>
<comment type="miscellaneous">
    <text evidence="3">In contrast to vertebrates and insects, its C-terminus is not monoubiquitinated.</text>
</comment>
<comment type="similarity">
    <text evidence="3">Belongs to the histone H2A family.</text>
</comment>
<comment type="caution">
    <text evidence="3">To ensure consistency between histone entries, we follow the 'Brno' nomenclature for histone modifications, with positions referring to those used in the literature for the 'closest' model organism. Due to slight variations in histone sequences between organisms and to the presence of initiator methionine in UniProtKB/Swiss-Prot sequences, the actual positions of modified amino acids in the sequence generally differ. In this entry the following conventions are used: H2AK4ac = acetylated Lys-5; H2AK7ac = acetylated Lys-7; H2AK126su = sumoylated Lys-126; H2AS128ph = phosphorylated Ser-128.</text>
</comment>
<name>H2A2_PICST</name>
<protein>
    <recommendedName>
        <fullName>Histone H2A.2</fullName>
    </recommendedName>
</protein>
<dbReference type="EMBL" id="CP000500">
    <property type="protein sequence ID" value="ABN67443.1"/>
    <property type="molecule type" value="Genomic_DNA"/>
</dbReference>
<dbReference type="RefSeq" id="XP_001385472.1">
    <property type="nucleotide sequence ID" value="XM_001385435.1"/>
</dbReference>
<dbReference type="SMR" id="A3LXE7"/>
<dbReference type="FunCoup" id="A3LXE7">
    <property type="interactions" value="1165"/>
</dbReference>
<dbReference type="STRING" id="322104.A3LXE7"/>
<dbReference type="GeneID" id="4840027"/>
<dbReference type="KEGG" id="pic:PICST_73490"/>
<dbReference type="eggNOG" id="KOG1756">
    <property type="taxonomic scope" value="Eukaryota"/>
</dbReference>
<dbReference type="HOGENOM" id="CLU_062828_3_1_1"/>
<dbReference type="InParanoid" id="A3LXE7"/>
<dbReference type="OMA" id="YWARRTA"/>
<dbReference type="OrthoDB" id="9421954at2759"/>
<dbReference type="Proteomes" id="UP000002258">
    <property type="component" value="Chromosome 6"/>
</dbReference>
<dbReference type="GO" id="GO:0000786">
    <property type="term" value="C:nucleosome"/>
    <property type="evidence" value="ECO:0007669"/>
    <property type="project" value="UniProtKB-KW"/>
</dbReference>
<dbReference type="GO" id="GO:0005634">
    <property type="term" value="C:nucleus"/>
    <property type="evidence" value="ECO:0007669"/>
    <property type="project" value="UniProtKB-SubCell"/>
</dbReference>
<dbReference type="GO" id="GO:0003677">
    <property type="term" value="F:DNA binding"/>
    <property type="evidence" value="ECO:0007669"/>
    <property type="project" value="UniProtKB-KW"/>
</dbReference>
<dbReference type="GO" id="GO:0046982">
    <property type="term" value="F:protein heterodimerization activity"/>
    <property type="evidence" value="ECO:0007669"/>
    <property type="project" value="InterPro"/>
</dbReference>
<dbReference type="GO" id="GO:0030527">
    <property type="term" value="F:structural constituent of chromatin"/>
    <property type="evidence" value="ECO:0007669"/>
    <property type="project" value="InterPro"/>
</dbReference>
<dbReference type="GO" id="GO:0006281">
    <property type="term" value="P:DNA repair"/>
    <property type="evidence" value="ECO:0007669"/>
    <property type="project" value="UniProtKB-KW"/>
</dbReference>
<dbReference type="CDD" id="cd00074">
    <property type="entry name" value="HFD_H2A"/>
    <property type="match status" value="1"/>
</dbReference>
<dbReference type="FunFam" id="1.10.20.10:FF:000008">
    <property type="entry name" value="Histone H2A"/>
    <property type="match status" value="1"/>
</dbReference>
<dbReference type="Gene3D" id="1.10.20.10">
    <property type="entry name" value="Histone, subunit A"/>
    <property type="match status" value="1"/>
</dbReference>
<dbReference type="InterPro" id="IPR009072">
    <property type="entry name" value="Histone-fold"/>
</dbReference>
<dbReference type="InterPro" id="IPR002119">
    <property type="entry name" value="Histone_H2A"/>
</dbReference>
<dbReference type="InterPro" id="IPR007125">
    <property type="entry name" value="Histone_H2A/H2B/H3"/>
</dbReference>
<dbReference type="InterPro" id="IPR032454">
    <property type="entry name" value="Histone_H2A_C"/>
</dbReference>
<dbReference type="InterPro" id="IPR032458">
    <property type="entry name" value="Histone_H2A_CS"/>
</dbReference>
<dbReference type="PANTHER" id="PTHR23430">
    <property type="entry name" value="HISTONE H2A"/>
    <property type="match status" value="1"/>
</dbReference>
<dbReference type="Pfam" id="PF00125">
    <property type="entry name" value="Histone"/>
    <property type="match status" value="1"/>
</dbReference>
<dbReference type="Pfam" id="PF16211">
    <property type="entry name" value="Histone_H2A_C"/>
    <property type="match status" value="1"/>
</dbReference>
<dbReference type="PRINTS" id="PR00620">
    <property type="entry name" value="HISTONEH2A"/>
</dbReference>
<dbReference type="SMART" id="SM00414">
    <property type="entry name" value="H2A"/>
    <property type="match status" value="1"/>
</dbReference>
<dbReference type="SUPFAM" id="SSF47113">
    <property type="entry name" value="Histone-fold"/>
    <property type="match status" value="1"/>
</dbReference>
<dbReference type="PROSITE" id="PS00046">
    <property type="entry name" value="HISTONE_H2A"/>
    <property type="match status" value="1"/>
</dbReference>